<evidence type="ECO:0000255" key="1">
    <source>
        <dbReference type="PROSITE-ProRule" id="PRU00395"/>
    </source>
</evidence>
<evidence type="ECO:0000269" key="2">
    <source>
    </source>
</evidence>
<evidence type="ECO:0000303" key="3">
    <source>
    </source>
</evidence>
<evidence type="ECO:0000305" key="4"/>
<evidence type="ECO:0000305" key="5">
    <source>
    </source>
</evidence>
<proteinExistence type="evidence at protein level"/>
<comment type="function">
    <text evidence="1 2">Probably participates in a plant defense mechanism (Probable). Not active against Gram-negative bacteria E.coli ATCC 700926, K.pneumoniae ATTC 13883 and P.aeruginosa ATCC 39018 at concentration up to 100 uM (PubMed:21596752). Has cytotoxic and hemolytic activity (PubMed:21596752).</text>
</comment>
<comment type="tissue specificity">
    <text evidence="2">Expressed in flower, stem, shoot, leaf and seed but not in root, pod and nodule (at protein level).</text>
</comment>
<comment type="domain">
    <text evidence="4">The presence of a 'disulfide through disulfide knot' structurally defines this protein as a knottin.</text>
</comment>
<comment type="PTM">
    <text evidence="2">Contains 3 disulfide bonds.</text>
</comment>
<comment type="PTM">
    <text evidence="1 2">This is a cyclic peptide.</text>
</comment>
<comment type="mass spectrometry"/>
<comment type="similarity">
    <text evidence="1">Belongs to the cyclotide family. Moebius subfamily.</text>
</comment>
<keyword id="KW-0903">Direct protein sequencing</keyword>
<keyword id="KW-1015">Disulfide bond</keyword>
<keyword id="KW-0960">Knottin</keyword>
<keyword id="KW-0611">Plant defense</keyword>
<keyword id="KW-0732">Signal</keyword>
<sequence>MAYVRLTSLAVLFFLAASVMKTEGGLPTCGETCTLGTCYVPDCSCSWPICMKNHIIAANAKTVNEHRLLCTSHEDCFKKGTGNYCASFPDSNIHFGWCFHAESEGYLLKDFMNMSKDDLKMPLESTN</sequence>
<accession>C0HKG1</accession>
<reference evidence="4" key="1">
    <citation type="journal article" date="2011" name="J. Biol. Chem.">
        <title>Discovery and characterization of novel cyclotides originated from chimeric precursors consisting of albumin-1 chain a and cyclotide domains in the fabaceae family.</title>
        <authorList>
            <person name="Nguyen G.K."/>
            <person name="Zhang S."/>
            <person name="Nguyen N.T."/>
            <person name="Nguyen P.Q."/>
            <person name="Chiu M.S."/>
            <person name="Hardjojo A."/>
            <person name="Tam J.P."/>
        </authorList>
    </citation>
    <scope>NUCLEOTIDE SEQUENCE [MRNA]</scope>
    <scope>PROTEIN SEQUENCE OF 25-53</scope>
    <scope>FUNCTION</scope>
    <scope>PRESENCE OF DISULFIDE BONDS</scope>
    <scope>CYCLIZATION</scope>
    <scope>TISSUE SPECIFICITY</scope>
    <scope>MASS SPECTROMETRY</scope>
    <scope>IDENTIFICATION BY MASS SPECTROMETRY</scope>
</reference>
<protein>
    <recommendedName>
        <fullName evidence="3">Cliotide T3</fullName>
    </recommendedName>
</protein>
<feature type="signal peptide" evidence="2">
    <location>
        <begin position="1"/>
        <end position="24"/>
    </location>
</feature>
<feature type="peptide" id="PRO_0000440051" description="Cliotide T3" evidence="2">
    <location>
        <begin position="25"/>
        <end position="53"/>
    </location>
</feature>
<feature type="propeptide" id="PRO_0000440052" description="Removed in mature form" evidence="5">
    <location>
        <begin position="54"/>
        <end position="127"/>
    </location>
</feature>
<feature type="disulfide bond" evidence="1">
    <location>
        <begin position="29"/>
        <end position="43"/>
    </location>
</feature>
<feature type="disulfide bond" evidence="1">
    <location>
        <begin position="33"/>
        <end position="45"/>
    </location>
</feature>
<feature type="disulfide bond" evidence="1">
    <location>
        <begin position="38"/>
        <end position="50"/>
    </location>
</feature>
<feature type="cross-link" description="Cyclopeptide (Gly-Asn)" evidence="2">
    <location>
        <begin position="25"/>
        <end position="53"/>
    </location>
</feature>
<dbReference type="SMR" id="C0HKG1"/>
<dbReference type="GO" id="GO:0006952">
    <property type="term" value="P:defense response"/>
    <property type="evidence" value="ECO:0007669"/>
    <property type="project" value="UniProtKB-KW"/>
</dbReference>
<dbReference type="InterPro" id="IPR032000">
    <property type="entry name" value="Albumin_I_a"/>
</dbReference>
<dbReference type="InterPro" id="IPR005535">
    <property type="entry name" value="Cyclotide"/>
</dbReference>
<dbReference type="InterPro" id="IPR012324">
    <property type="entry name" value="Cyclotide_moebius_CS"/>
</dbReference>
<dbReference type="InterPro" id="IPR036146">
    <property type="entry name" value="Cyclotide_sf"/>
</dbReference>
<dbReference type="Pfam" id="PF16720">
    <property type="entry name" value="Albumin_I_a"/>
    <property type="match status" value="1"/>
</dbReference>
<dbReference type="Pfam" id="PF03784">
    <property type="entry name" value="Cyclotide"/>
    <property type="match status" value="1"/>
</dbReference>
<dbReference type="SUPFAM" id="SSF57038">
    <property type="entry name" value="Cyclotides"/>
    <property type="match status" value="1"/>
</dbReference>
<dbReference type="PROSITE" id="PS51052">
    <property type="entry name" value="CYCLOTIDE"/>
    <property type="match status" value="1"/>
</dbReference>
<dbReference type="PROSITE" id="PS60009">
    <property type="entry name" value="CYCLOTIDE_MOEBIUS"/>
    <property type="match status" value="1"/>
</dbReference>
<name>CYC3_CLITE</name>
<organism evidence="3">
    <name type="scientific">Clitoria ternatea</name>
    <name type="common">Butterfly pea</name>
    <dbReference type="NCBI Taxonomy" id="43366"/>
    <lineage>
        <taxon>Eukaryota</taxon>
        <taxon>Viridiplantae</taxon>
        <taxon>Streptophyta</taxon>
        <taxon>Embryophyta</taxon>
        <taxon>Tracheophyta</taxon>
        <taxon>Spermatophyta</taxon>
        <taxon>Magnoliopsida</taxon>
        <taxon>eudicotyledons</taxon>
        <taxon>Gunneridae</taxon>
        <taxon>Pentapetalae</taxon>
        <taxon>rosids</taxon>
        <taxon>fabids</taxon>
        <taxon>Fabales</taxon>
        <taxon>Fabaceae</taxon>
        <taxon>Papilionoideae</taxon>
        <taxon>50 kb inversion clade</taxon>
        <taxon>NPAAA clade</taxon>
        <taxon>indigoferoid/millettioid clade</taxon>
        <taxon>Phaseoleae</taxon>
        <taxon>Clitoria</taxon>
    </lineage>
</organism>